<evidence type="ECO:0000255" key="1">
    <source>
        <dbReference type="HAMAP-Rule" id="MF_01350"/>
    </source>
</evidence>
<reference key="1">
    <citation type="journal article" date="2006" name="BMC Evol. Biol.">
        <title>Phylogenetic analyses of Vitis (Vitaceae) based on complete chloroplast genome sequences: effects of taxon sampling and phylogenetic methods on resolving relationships among rosids.</title>
        <authorList>
            <person name="Jansen R.K."/>
            <person name="Kaittanis C."/>
            <person name="Lee S.-B."/>
            <person name="Saski C."/>
            <person name="Tomkins J."/>
            <person name="Alverson A.J."/>
            <person name="Daniell H."/>
        </authorList>
    </citation>
    <scope>NUCLEOTIDE SEQUENCE [LARGE SCALE GENOMIC DNA]</scope>
    <source>
        <strain>cv. Maxxa</strain>
    </source>
</reference>
<sequence>MIIDTPEVQDINSFSRLEYLKEVYGIIWMLVPIFTPVLGITIGVLAIVWLEREISAGIQQRIGPEYAGPLGILQALADGTKLLFKENLLPSRGDTRLFSIGPSIAVISILLSYLIIPFGSNLVLSDLNIGVFLWIAISSIAPIGLLMSGYGSNNKYSFLGGLRAAAQSISYEIPLTLCVLSISLLSNSSSTVDIVEAQSKYGFWGWNLWRQPIGFIVFLISSLAECERLPFDLPEAEEELVAGYQTEYSGIKFGLFYVASYLNLLVSSLFVTVLYLGGWDLSIPYIFVPEFFEINKAGEVFGTTIGIFITLAKTYLFLFIPITTRWTLPRLRMDQLLNLGWKFLLPISLGNLLLTTSSQLLSL</sequence>
<accession>Q0ZIW3</accession>
<geneLocation type="chloroplast"/>
<protein>
    <recommendedName>
        <fullName evidence="1">NAD(P)H-quinone oxidoreductase subunit 1, chloroplastic</fullName>
        <ecNumber evidence="1">7.1.1.-</ecNumber>
    </recommendedName>
    <alternativeName>
        <fullName evidence="1">NAD(P)H dehydrogenase subunit 1</fullName>
        <shortName evidence="1">NDH subunit 1</shortName>
    </alternativeName>
    <alternativeName>
        <fullName evidence="1">NADH-plastoquinone oxidoreductase subunit 1</fullName>
    </alternativeName>
</protein>
<name>NU1C_VITVI</name>
<proteinExistence type="inferred from homology"/>
<dbReference type="EC" id="7.1.1.-" evidence="1"/>
<dbReference type="EMBL" id="DQ424856">
    <property type="protein sequence ID" value="ABE47590.1"/>
    <property type="molecule type" value="Genomic_DNA"/>
</dbReference>
<dbReference type="RefSeq" id="YP_567133.1">
    <property type="nucleotide sequence ID" value="NC_007957.1"/>
</dbReference>
<dbReference type="SMR" id="Q0ZIW3"/>
<dbReference type="FunCoup" id="Q0ZIW3">
    <property type="interactions" value="31"/>
</dbReference>
<dbReference type="STRING" id="29760.Q0ZIW3"/>
<dbReference type="PaxDb" id="29760-VIT_10s0116g00060.t01"/>
<dbReference type="GeneID" id="4025044"/>
<dbReference type="KEGG" id="vvi:4025044"/>
<dbReference type="eggNOG" id="KOG2870">
    <property type="taxonomic scope" value="Eukaryota"/>
</dbReference>
<dbReference type="eggNOG" id="KOG4770">
    <property type="taxonomic scope" value="Eukaryota"/>
</dbReference>
<dbReference type="InParanoid" id="Q0ZIW3"/>
<dbReference type="OrthoDB" id="531329at2759"/>
<dbReference type="Proteomes" id="UP000009183">
    <property type="component" value="Chloroplast"/>
</dbReference>
<dbReference type="ExpressionAtlas" id="Q0ZIW3">
    <property type="expression patterns" value="baseline and differential"/>
</dbReference>
<dbReference type="GO" id="GO:0009535">
    <property type="term" value="C:chloroplast thylakoid membrane"/>
    <property type="evidence" value="ECO:0007669"/>
    <property type="project" value="UniProtKB-SubCell"/>
</dbReference>
<dbReference type="GO" id="GO:0016655">
    <property type="term" value="F:oxidoreductase activity, acting on NAD(P)H, quinone or similar compound as acceptor"/>
    <property type="evidence" value="ECO:0007669"/>
    <property type="project" value="UniProtKB-UniRule"/>
</dbReference>
<dbReference type="GO" id="GO:0048038">
    <property type="term" value="F:quinone binding"/>
    <property type="evidence" value="ECO:0007669"/>
    <property type="project" value="UniProtKB-KW"/>
</dbReference>
<dbReference type="GO" id="GO:0009060">
    <property type="term" value="P:aerobic respiration"/>
    <property type="evidence" value="ECO:0000318"/>
    <property type="project" value="GO_Central"/>
</dbReference>
<dbReference type="GO" id="GO:0019684">
    <property type="term" value="P:photosynthesis, light reaction"/>
    <property type="evidence" value="ECO:0007669"/>
    <property type="project" value="UniProtKB-UniRule"/>
</dbReference>
<dbReference type="HAMAP" id="MF_01350">
    <property type="entry name" value="NDH1_NuoH"/>
    <property type="match status" value="1"/>
</dbReference>
<dbReference type="InterPro" id="IPR001694">
    <property type="entry name" value="NADH_UbQ_OxRdtase_su1/FPO"/>
</dbReference>
<dbReference type="InterPro" id="IPR018086">
    <property type="entry name" value="NADH_UbQ_OxRdtase_su1_CS"/>
</dbReference>
<dbReference type="NCBIfam" id="NF004741">
    <property type="entry name" value="PRK06076.1-2"/>
    <property type="match status" value="1"/>
</dbReference>
<dbReference type="PANTHER" id="PTHR11432">
    <property type="entry name" value="NADH DEHYDROGENASE SUBUNIT 1"/>
    <property type="match status" value="1"/>
</dbReference>
<dbReference type="PANTHER" id="PTHR11432:SF3">
    <property type="entry name" value="NADH-UBIQUINONE OXIDOREDUCTASE CHAIN 1"/>
    <property type="match status" value="1"/>
</dbReference>
<dbReference type="Pfam" id="PF00146">
    <property type="entry name" value="NADHdh"/>
    <property type="match status" value="1"/>
</dbReference>
<dbReference type="PROSITE" id="PS00667">
    <property type="entry name" value="COMPLEX1_ND1_1"/>
    <property type="match status" value="1"/>
</dbReference>
<dbReference type="PROSITE" id="PS00668">
    <property type="entry name" value="COMPLEX1_ND1_2"/>
    <property type="match status" value="1"/>
</dbReference>
<keyword id="KW-0150">Chloroplast</keyword>
<keyword id="KW-0472">Membrane</keyword>
<keyword id="KW-0520">NAD</keyword>
<keyword id="KW-0521">NADP</keyword>
<keyword id="KW-0934">Plastid</keyword>
<keyword id="KW-0618">Plastoquinone</keyword>
<keyword id="KW-0874">Quinone</keyword>
<keyword id="KW-1185">Reference proteome</keyword>
<keyword id="KW-0793">Thylakoid</keyword>
<keyword id="KW-1278">Translocase</keyword>
<keyword id="KW-0812">Transmembrane</keyword>
<keyword id="KW-1133">Transmembrane helix</keyword>
<organism>
    <name type="scientific">Vitis vinifera</name>
    <name type="common">Grape</name>
    <dbReference type="NCBI Taxonomy" id="29760"/>
    <lineage>
        <taxon>Eukaryota</taxon>
        <taxon>Viridiplantae</taxon>
        <taxon>Streptophyta</taxon>
        <taxon>Embryophyta</taxon>
        <taxon>Tracheophyta</taxon>
        <taxon>Spermatophyta</taxon>
        <taxon>Magnoliopsida</taxon>
        <taxon>eudicotyledons</taxon>
        <taxon>Gunneridae</taxon>
        <taxon>Pentapetalae</taxon>
        <taxon>rosids</taxon>
        <taxon>Vitales</taxon>
        <taxon>Vitaceae</taxon>
        <taxon>Viteae</taxon>
        <taxon>Vitis</taxon>
    </lineage>
</organism>
<gene>
    <name evidence="1" type="primary">ndhA</name>
</gene>
<comment type="function">
    <text evidence="1">NDH shuttles electrons from NAD(P)H:plastoquinone, via FMN and iron-sulfur (Fe-S) centers, to quinones in the photosynthetic chain and possibly in a chloroplast respiratory chain. The immediate electron acceptor for the enzyme in this species is believed to be plastoquinone. Couples the redox reaction to proton translocation, and thus conserves the redox energy in a proton gradient.</text>
</comment>
<comment type="catalytic activity">
    <reaction evidence="1">
        <text>a plastoquinone + NADH + (n+1) H(+)(in) = a plastoquinol + NAD(+) + n H(+)(out)</text>
        <dbReference type="Rhea" id="RHEA:42608"/>
        <dbReference type="Rhea" id="RHEA-COMP:9561"/>
        <dbReference type="Rhea" id="RHEA-COMP:9562"/>
        <dbReference type="ChEBI" id="CHEBI:15378"/>
        <dbReference type="ChEBI" id="CHEBI:17757"/>
        <dbReference type="ChEBI" id="CHEBI:57540"/>
        <dbReference type="ChEBI" id="CHEBI:57945"/>
        <dbReference type="ChEBI" id="CHEBI:62192"/>
    </reaction>
</comment>
<comment type="catalytic activity">
    <reaction evidence="1">
        <text>a plastoquinone + NADPH + (n+1) H(+)(in) = a plastoquinol + NADP(+) + n H(+)(out)</text>
        <dbReference type="Rhea" id="RHEA:42612"/>
        <dbReference type="Rhea" id="RHEA-COMP:9561"/>
        <dbReference type="Rhea" id="RHEA-COMP:9562"/>
        <dbReference type="ChEBI" id="CHEBI:15378"/>
        <dbReference type="ChEBI" id="CHEBI:17757"/>
        <dbReference type="ChEBI" id="CHEBI:57783"/>
        <dbReference type="ChEBI" id="CHEBI:58349"/>
        <dbReference type="ChEBI" id="CHEBI:62192"/>
    </reaction>
</comment>
<comment type="subunit">
    <text evidence="1">NDH is composed of at least 16 different subunits, 5 of which are encoded in the nucleus.</text>
</comment>
<comment type="subcellular location">
    <subcellularLocation>
        <location evidence="1">Plastid</location>
        <location evidence="1">Chloroplast thylakoid membrane</location>
        <topology evidence="1">Multi-pass membrane protein</topology>
    </subcellularLocation>
</comment>
<comment type="similarity">
    <text evidence="1">Belongs to the complex I subunit 1 family.</text>
</comment>
<feature type="chain" id="PRO_0000275589" description="NAD(P)H-quinone oxidoreductase subunit 1, chloroplastic">
    <location>
        <begin position="1"/>
        <end position="363"/>
    </location>
</feature>
<feature type="transmembrane region" description="Helical" evidence="1">
    <location>
        <begin position="30"/>
        <end position="50"/>
    </location>
</feature>
<feature type="transmembrane region" description="Helical" evidence="1">
    <location>
        <begin position="98"/>
        <end position="118"/>
    </location>
</feature>
<feature type="transmembrane region" description="Helical" evidence="1">
    <location>
        <begin position="129"/>
        <end position="149"/>
    </location>
</feature>
<feature type="transmembrane region" description="Helical" evidence="1">
    <location>
        <begin position="248"/>
        <end position="268"/>
    </location>
</feature>
<feature type="transmembrane region" description="Helical" evidence="1">
    <location>
        <begin position="300"/>
        <end position="320"/>
    </location>
</feature>
<feature type="transmembrane region" description="Helical" evidence="1">
    <location>
        <begin position="336"/>
        <end position="356"/>
    </location>
</feature>